<reference key="1">
    <citation type="journal article" date="1996" name="Biochim. Biophys. Acta">
        <title>Cloning and expression of the cDNA for mouse NAD(+)-dependent 15-hydroxyprostaglandin dehydrogenase.</title>
        <authorList>
            <person name="Matsuo M."/>
            <person name="Ensor C.M."/>
            <person name="Tai H.H."/>
        </authorList>
    </citation>
    <scope>NUCLEOTIDE SEQUENCE [MRNA]</scope>
    <scope>FUNCTION</scope>
    <scope>CATALYTIC ACTIVITY</scope>
    <scope>TISSUE SPECIFICITY</scope>
    <source>
        <tissue>Lung</tissue>
    </source>
</reference>
<reference key="2">
    <citation type="journal article" date="2005" name="Science">
        <title>The transcriptional landscape of the mammalian genome.</title>
        <authorList>
            <person name="Carninci P."/>
            <person name="Kasukawa T."/>
            <person name="Katayama S."/>
            <person name="Gough J."/>
            <person name="Frith M.C."/>
            <person name="Maeda N."/>
            <person name="Oyama R."/>
            <person name="Ravasi T."/>
            <person name="Lenhard B."/>
            <person name="Wells C."/>
            <person name="Kodzius R."/>
            <person name="Shimokawa K."/>
            <person name="Bajic V.B."/>
            <person name="Brenner S.E."/>
            <person name="Batalov S."/>
            <person name="Forrest A.R."/>
            <person name="Zavolan M."/>
            <person name="Davis M.J."/>
            <person name="Wilming L.G."/>
            <person name="Aidinis V."/>
            <person name="Allen J.E."/>
            <person name="Ambesi-Impiombato A."/>
            <person name="Apweiler R."/>
            <person name="Aturaliya R.N."/>
            <person name="Bailey T.L."/>
            <person name="Bansal M."/>
            <person name="Baxter L."/>
            <person name="Beisel K.W."/>
            <person name="Bersano T."/>
            <person name="Bono H."/>
            <person name="Chalk A.M."/>
            <person name="Chiu K.P."/>
            <person name="Choudhary V."/>
            <person name="Christoffels A."/>
            <person name="Clutterbuck D.R."/>
            <person name="Crowe M.L."/>
            <person name="Dalla E."/>
            <person name="Dalrymple B.P."/>
            <person name="de Bono B."/>
            <person name="Della Gatta G."/>
            <person name="di Bernardo D."/>
            <person name="Down T."/>
            <person name="Engstrom P."/>
            <person name="Fagiolini M."/>
            <person name="Faulkner G."/>
            <person name="Fletcher C.F."/>
            <person name="Fukushima T."/>
            <person name="Furuno M."/>
            <person name="Futaki S."/>
            <person name="Gariboldi M."/>
            <person name="Georgii-Hemming P."/>
            <person name="Gingeras T.R."/>
            <person name="Gojobori T."/>
            <person name="Green R.E."/>
            <person name="Gustincich S."/>
            <person name="Harbers M."/>
            <person name="Hayashi Y."/>
            <person name="Hensch T.K."/>
            <person name="Hirokawa N."/>
            <person name="Hill D."/>
            <person name="Huminiecki L."/>
            <person name="Iacono M."/>
            <person name="Ikeo K."/>
            <person name="Iwama A."/>
            <person name="Ishikawa T."/>
            <person name="Jakt M."/>
            <person name="Kanapin A."/>
            <person name="Katoh M."/>
            <person name="Kawasawa Y."/>
            <person name="Kelso J."/>
            <person name="Kitamura H."/>
            <person name="Kitano H."/>
            <person name="Kollias G."/>
            <person name="Krishnan S.P."/>
            <person name="Kruger A."/>
            <person name="Kummerfeld S.K."/>
            <person name="Kurochkin I.V."/>
            <person name="Lareau L.F."/>
            <person name="Lazarevic D."/>
            <person name="Lipovich L."/>
            <person name="Liu J."/>
            <person name="Liuni S."/>
            <person name="McWilliam S."/>
            <person name="Madan Babu M."/>
            <person name="Madera M."/>
            <person name="Marchionni L."/>
            <person name="Matsuda H."/>
            <person name="Matsuzawa S."/>
            <person name="Miki H."/>
            <person name="Mignone F."/>
            <person name="Miyake S."/>
            <person name="Morris K."/>
            <person name="Mottagui-Tabar S."/>
            <person name="Mulder N."/>
            <person name="Nakano N."/>
            <person name="Nakauchi H."/>
            <person name="Ng P."/>
            <person name="Nilsson R."/>
            <person name="Nishiguchi S."/>
            <person name="Nishikawa S."/>
            <person name="Nori F."/>
            <person name="Ohara O."/>
            <person name="Okazaki Y."/>
            <person name="Orlando V."/>
            <person name="Pang K.C."/>
            <person name="Pavan W.J."/>
            <person name="Pavesi G."/>
            <person name="Pesole G."/>
            <person name="Petrovsky N."/>
            <person name="Piazza S."/>
            <person name="Reed J."/>
            <person name="Reid J.F."/>
            <person name="Ring B.Z."/>
            <person name="Ringwald M."/>
            <person name="Rost B."/>
            <person name="Ruan Y."/>
            <person name="Salzberg S.L."/>
            <person name="Sandelin A."/>
            <person name="Schneider C."/>
            <person name="Schoenbach C."/>
            <person name="Sekiguchi K."/>
            <person name="Semple C.A."/>
            <person name="Seno S."/>
            <person name="Sessa L."/>
            <person name="Sheng Y."/>
            <person name="Shibata Y."/>
            <person name="Shimada H."/>
            <person name="Shimada K."/>
            <person name="Silva D."/>
            <person name="Sinclair B."/>
            <person name="Sperling S."/>
            <person name="Stupka E."/>
            <person name="Sugiura K."/>
            <person name="Sultana R."/>
            <person name="Takenaka Y."/>
            <person name="Taki K."/>
            <person name="Tammoja K."/>
            <person name="Tan S.L."/>
            <person name="Tang S."/>
            <person name="Taylor M.S."/>
            <person name="Tegner J."/>
            <person name="Teichmann S.A."/>
            <person name="Ueda H.R."/>
            <person name="van Nimwegen E."/>
            <person name="Verardo R."/>
            <person name="Wei C.L."/>
            <person name="Yagi K."/>
            <person name="Yamanishi H."/>
            <person name="Zabarovsky E."/>
            <person name="Zhu S."/>
            <person name="Zimmer A."/>
            <person name="Hide W."/>
            <person name="Bult C."/>
            <person name="Grimmond S.M."/>
            <person name="Teasdale R.D."/>
            <person name="Liu E.T."/>
            <person name="Brusic V."/>
            <person name="Quackenbush J."/>
            <person name="Wahlestedt C."/>
            <person name="Mattick J.S."/>
            <person name="Hume D.A."/>
            <person name="Kai C."/>
            <person name="Sasaki D."/>
            <person name="Tomaru Y."/>
            <person name="Fukuda S."/>
            <person name="Kanamori-Katayama M."/>
            <person name="Suzuki M."/>
            <person name="Aoki J."/>
            <person name="Arakawa T."/>
            <person name="Iida J."/>
            <person name="Imamura K."/>
            <person name="Itoh M."/>
            <person name="Kato T."/>
            <person name="Kawaji H."/>
            <person name="Kawagashira N."/>
            <person name="Kawashima T."/>
            <person name="Kojima M."/>
            <person name="Kondo S."/>
            <person name="Konno H."/>
            <person name="Nakano K."/>
            <person name="Ninomiya N."/>
            <person name="Nishio T."/>
            <person name="Okada M."/>
            <person name="Plessy C."/>
            <person name="Shibata K."/>
            <person name="Shiraki T."/>
            <person name="Suzuki S."/>
            <person name="Tagami M."/>
            <person name="Waki K."/>
            <person name="Watahiki A."/>
            <person name="Okamura-Oho Y."/>
            <person name="Suzuki H."/>
            <person name="Kawai J."/>
            <person name="Hayashizaki Y."/>
        </authorList>
    </citation>
    <scope>NUCLEOTIDE SEQUENCE [LARGE SCALE MRNA]</scope>
    <source>
        <strain>C57BL/6J</strain>
        <tissue>Placenta</tissue>
    </source>
</reference>
<reference key="3">
    <citation type="journal article" date="2004" name="Genome Res.">
        <title>The status, quality, and expansion of the NIH full-length cDNA project: the Mammalian Gene Collection (MGC).</title>
        <authorList>
            <consortium name="The MGC Project Team"/>
        </authorList>
    </citation>
    <scope>NUCLEOTIDE SEQUENCE [LARGE SCALE MRNA]</scope>
    <source>
        <strain>FVB/N</strain>
        <tissue>Colon</tissue>
    </source>
</reference>
<reference key="4">
    <citation type="journal article" date="2010" name="Cell">
        <title>A tissue-specific atlas of mouse protein phosphorylation and expression.</title>
        <authorList>
            <person name="Huttlin E.L."/>
            <person name="Jedrychowski M.P."/>
            <person name="Elias J.E."/>
            <person name="Goswami T."/>
            <person name="Rad R."/>
            <person name="Beausoleil S.A."/>
            <person name="Villen J."/>
            <person name="Haas W."/>
            <person name="Sowa M.E."/>
            <person name="Gygi S.P."/>
        </authorList>
    </citation>
    <scope>IDENTIFICATION BY MASS SPECTROMETRY [LARGE SCALE ANALYSIS]</scope>
    <source>
        <tissue>Kidney</tissue>
        <tissue>Liver</tissue>
        <tissue>Lung</tissue>
        <tissue>Testis</tissue>
    </source>
</reference>
<reference key="5">
    <citation type="journal article" date="2010" name="J. Biol. Chem.">
        <title>A novel transporter of SLC22 family specifically transports prostaglandins and co-localizes with 15-hydroxyprostaglandin dehydrogenase in renal proximal tubules.</title>
        <authorList>
            <person name="Shiraya K."/>
            <person name="Hirata T."/>
            <person name="Hatano R."/>
            <person name="Nagamori S."/>
            <person name="Wiriyasermkul P."/>
            <person name="Jutabha P."/>
            <person name="Matsubara M."/>
            <person name="Muto S."/>
            <person name="Tanaka H."/>
            <person name="Asano S."/>
            <person name="Anzai N."/>
            <person name="Endou H."/>
            <person name="Yamada A."/>
            <person name="Sakurai H."/>
            <person name="Kanai Y."/>
        </authorList>
    </citation>
    <scope>TISSUE SPECIFICITY</scope>
</reference>
<gene>
    <name type="primary">Hpgd</name>
    <name type="synonym">Pgdh1</name>
</gene>
<accession>Q8VCC1</accession>
<accession>Q61106</accession>
<name>PGDH_MOUSE</name>
<protein>
    <recommendedName>
        <fullName>15-hydroxyprostaglandin dehydrogenase [NAD(+)]</fullName>
        <shortName>15-PGDH</shortName>
        <ecNumber evidence="7">1.1.1.141</ecNumber>
    </recommendedName>
    <alternativeName>
        <fullName>Eicosanoid/docosanoid dehydrogenase [NAD(+)]</fullName>
        <ecNumber evidence="2">1.1.1.-</ecNumber>
        <ecNumber evidence="2">1.1.1.232</ecNumber>
    </alternativeName>
    <alternativeName>
        <fullName>Prostaglandin dehydrogenase 1</fullName>
    </alternativeName>
</protein>
<sequence length="269" mass="29181">MHVNGKVALVTGAAQGIGKAFAEALLLHGAKVALVDWNLEAGVKCKAALDEQFEPQKTLFVQCDVADQKQLRDTFRKVVDHFGRLDILVNNAGVNNEKNWEQTLQINLVSVISGTYLGLDYMSKQNGGEGGIIINMSSLAGLMPVAQQPVYCASKHGIIGFTRSAAMAANLMKSGVRLNVICPGFVDTPILESIEKEENMGQYIEYKDQIKAMMKFYGVLHPSTIANGLINLIEDDALNGAIMKITASKGIHFQDYDISPLLVKAPLTS</sequence>
<comment type="function">
    <text evidence="2 5">Catalyzes the NAD-dependent dehydrogenation (oxidation) of a broad array of hydroxylated polyunsaturated fatty acids (mainly eicosanoids and docosanoids, including prostaglandins, lipoxins and resolvins), yielding their corresponding keto (oxo) metabolites (By similarity) (PubMed:8950170). Decreases the levels of the pro-proliferative prostaglandins such as prostaglandin E2 (whose activity is increased in cancer because of an increase in the expression of cyclooxygenase 2) and generates oxo-fatty acid products that can profoundly influence cell function by abrogating pro-inflammatory cytokine expression. Converts resolvins E1, D1 and D2 to their oxo products, which represents a mode of resolvin inactivation. Resolvin E1 plays important roles during the resolution phase of acute inflammation, while resolvins D1 and D2 have a unique role in obesity-induced adipose inflammation (By similarity).</text>
</comment>
<comment type="catalytic activity">
    <reaction evidence="7">
        <text>prostaglandin E2 + NAD(+) = 15-oxoprostaglandin E2 + NADH + H(+)</text>
        <dbReference type="Rhea" id="RHEA:11876"/>
        <dbReference type="ChEBI" id="CHEBI:15378"/>
        <dbReference type="ChEBI" id="CHEBI:57400"/>
        <dbReference type="ChEBI" id="CHEBI:57540"/>
        <dbReference type="ChEBI" id="CHEBI:57945"/>
        <dbReference type="ChEBI" id="CHEBI:606564"/>
        <dbReference type="EC" id="1.1.1.141"/>
    </reaction>
    <physiologicalReaction direction="left-to-right" evidence="7">
        <dbReference type="Rhea" id="RHEA:11877"/>
    </physiologicalReaction>
</comment>
<comment type="catalytic activity">
    <reaction evidence="2">
        <text>(15S)-hydroxy-(5Z,8Z,11Z,13E)-eicosatetraenoate + NAD(+) = 15-oxo-(5Z,8Z,11Z,13E)-eicosatetraenoate + NADH + H(+)</text>
        <dbReference type="Rhea" id="RHEA:23260"/>
        <dbReference type="ChEBI" id="CHEBI:15378"/>
        <dbReference type="ChEBI" id="CHEBI:57409"/>
        <dbReference type="ChEBI" id="CHEBI:57410"/>
        <dbReference type="ChEBI" id="CHEBI:57540"/>
        <dbReference type="ChEBI" id="CHEBI:57945"/>
        <dbReference type="EC" id="1.1.1.232"/>
    </reaction>
    <physiologicalReaction direction="left-to-right" evidence="2">
        <dbReference type="Rhea" id="RHEA:23261"/>
    </physiologicalReaction>
</comment>
<comment type="catalytic activity">
    <reaction evidence="2">
        <text>(11R)-hydroxy-(5Z,8Z,12E,14Z)-eicosatetraenoate + NAD(+) = 11-oxo-(5Z,8Z,12E,14Z)-eicosatetraenoate + NADH + H(+)</text>
        <dbReference type="Rhea" id="RHEA:48640"/>
        <dbReference type="ChEBI" id="CHEBI:15378"/>
        <dbReference type="ChEBI" id="CHEBI:57540"/>
        <dbReference type="ChEBI" id="CHEBI:57945"/>
        <dbReference type="ChEBI" id="CHEBI:78836"/>
        <dbReference type="ChEBI" id="CHEBI:90697"/>
    </reaction>
    <physiologicalReaction direction="left-to-right" evidence="2">
        <dbReference type="Rhea" id="RHEA:48641"/>
    </physiologicalReaction>
</comment>
<comment type="catalytic activity">
    <reaction evidence="2">
        <text>lipoxin A4 + NAD(+) = 15-oxo-(5S,6R)-dihydroxy-(7E,9E,11Z,13E)-eicosatetraenoate + NADH + H(+)</text>
        <dbReference type="Rhea" id="RHEA:41572"/>
        <dbReference type="ChEBI" id="CHEBI:15378"/>
        <dbReference type="ChEBI" id="CHEBI:57540"/>
        <dbReference type="ChEBI" id="CHEBI:57945"/>
        <dbReference type="ChEBI" id="CHEBI:67026"/>
        <dbReference type="ChEBI" id="CHEBI:78311"/>
    </reaction>
    <physiologicalReaction direction="left-to-right" evidence="2">
        <dbReference type="Rhea" id="RHEA:41573"/>
    </physiologicalReaction>
</comment>
<comment type="catalytic activity">
    <reaction evidence="2">
        <text>15-oxo-(5S,6R)-dihydroxy-(7E,9E,11Z)-eicosatrienoate + NADH + H(+) = (5S,6R,15S)-trihydroxy-(7E,9E,11Z)-eicosatrienoate + NAD(+)</text>
        <dbReference type="Rhea" id="RHEA:41596"/>
        <dbReference type="ChEBI" id="CHEBI:15378"/>
        <dbReference type="ChEBI" id="CHEBI:57540"/>
        <dbReference type="ChEBI" id="CHEBI:57945"/>
        <dbReference type="ChEBI" id="CHEBI:78325"/>
        <dbReference type="ChEBI" id="CHEBI:78329"/>
    </reaction>
    <physiologicalReaction direction="left-to-right" evidence="2">
        <dbReference type="Rhea" id="RHEA:41597"/>
    </physiologicalReaction>
</comment>
<comment type="catalytic activity">
    <reaction evidence="2">
        <text>prostaglandin A1 + NAD(+) = 15-oxo-prostaglandin A1 + NADH + H(+)</text>
        <dbReference type="Rhea" id="RHEA:41263"/>
        <dbReference type="ChEBI" id="CHEBI:15378"/>
        <dbReference type="ChEBI" id="CHEBI:57398"/>
        <dbReference type="ChEBI" id="CHEBI:57540"/>
        <dbReference type="ChEBI" id="CHEBI:57945"/>
        <dbReference type="ChEBI" id="CHEBI:85072"/>
    </reaction>
    <physiologicalReaction direction="left-to-right" evidence="2">
        <dbReference type="Rhea" id="RHEA:41264"/>
    </physiologicalReaction>
</comment>
<comment type="catalytic activity">
    <reaction evidence="2">
        <text>prostaglandin E1 + NAD(+) = 15-oxoprostaglandin E1 + NADH + H(+)</text>
        <dbReference type="Rhea" id="RHEA:16477"/>
        <dbReference type="ChEBI" id="CHEBI:15378"/>
        <dbReference type="ChEBI" id="CHEBI:57397"/>
        <dbReference type="ChEBI" id="CHEBI:57401"/>
        <dbReference type="ChEBI" id="CHEBI:57540"/>
        <dbReference type="ChEBI" id="CHEBI:57945"/>
    </reaction>
    <physiologicalReaction direction="left-to-right" evidence="2">
        <dbReference type="Rhea" id="RHEA:16478"/>
    </physiologicalReaction>
</comment>
<comment type="catalytic activity">
    <reaction evidence="2">
        <text>14-hydroxy-(4Z,7Z,10Z,12E,16Z,19Z)-docosahexaenoate + NAD(+) = 14-oxo-(4Z,7Z,10Z,12E,16Z,19Z)-docosahexaenoate + NADH + H(+)</text>
        <dbReference type="Rhea" id="RHEA:48952"/>
        <dbReference type="ChEBI" id="CHEBI:15378"/>
        <dbReference type="ChEBI" id="CHEBI:57540"/>
        <dbReference type="ChEBI" id="CHEBI:57945"/>
        <dbReference type="ChEBI" id="CHEBI:90866"/>
        <dbReference type="ChEBI" id="CHEBI:90867"/>
    </reaction>
    <physiologicalReaction direction="left-to-right" evidence="2">
        <dbReference type="Rhea" id="RHEA:48953"/>
    </physiologicalReaction>
</comment>
<comment type="catalytic activity">
    <reaction evidence="2">
        <text>resolvin E1 + NAD(+) = 18-oxo-resolvin E1 + NADH + H(+)</text>
        <dbReference type="Rhea" id="RHEA:49244"/>
        <dbReference type="ChEBI" id="CHEBI:15378"/>
        <dbReference type="ChEBI" id="CHEBI:57540"/>
        <dbReference type="ChEBI" id="CHEBI:57945"/>
        <dbReference type="ChEBI" id="CHEBI:91000"/>
        <dbReference type="ChEBI" id="CHEBI:91001"/>
    </reaction>
    <physiologicalReaction direction="left-to-right" evidence="2">
        <dbReference type="Rhea" id="RHEA:49245"/>
    </physiologicalReaction>
</comment>
<comment type="catalytic activity">
    <reaction evidence="2">
        <text>resolvin D1 + NAD(+) = 8-oxoresolvin D1 + NADH + H(+)</text>
        <dbReference type="Rhea" id="RHEA:50124"/>
        <dbReference type="ChEBI" id="CHEBI:15378"/>
        <dbReference type="ChEBI" id="CHEBI:57540"/>
        <dbReference type="ChEBI" id="CHEBI:57945"/>
        <dbReference type="ChEBI" id="CHEBI:132079"/>
        <dbReference type="ChEBI" id="CHEBI:132080"/>
    </reaction>
    <physiologicalReaction direction="left-to-right" evidence="2">
        <dbReference type="Rhea" id="RHEA:50125"/>
    </physiologicalReaction>
</comment>
<comment type="catalytic activity">
    <reaction evidence="2">
        <text>resolvin D1 + NAD(+) = 17-oxoresolvin D1 + NADH + H(+)</text>
        <dbReference type="Rhea" id="RHEA:50128"/>
        <dbReference type="ChEBI" id="CHEBI:15378"/>
        <dbReference type="ChEBI" id="CHEBI:57540"/>
        <dbReference type="ChEBI" id="CHEBI:57945"/>
        <dbReference type="ChEBI" id="CHEBI:132079"/>
        <dbReference type="ChEBI" id="CHEBI:132081"/>
    </reaction>
    <physiologicalReaction direction="left-to-right" evidence="2">
        <dbReference type="Rhea" id="RHEA:50129"/>
    </physiologicalReaction>
</comment>
<comment type="catalytic activity">
    <reaction evidence="2">
        <text>resolvin D2 + NAD(+) = 7-oxoresolvin D2 + NADH + H(+)</text>
        <dbReference type="Rhea" id="RHEA:53584"/>
        <dbReference type="ChEBI" id="CHEBI:15378"/>
        <dbReference type="ChEBI" id="CHEBI:57540"/>
        <dbReference type="ChEBI" id="CHEBI:57945"/>
        <dbReference type="ChEBI" id="CHEBI:133367"/>
        <dbReference type="ChEBI" id="CHEBI:137497"/>
    </reaction>
    <physiologicalReaction direction="left-to-right" evidence="2">
        <dbReference type="Rhea" id="RHEA:53585"/>
    </physiologicalReaction>
</comment>
<comment type="catalytic activity">
    <reaction evidence="2">
        <text>resolvin D2 + NAD(+) = 16-oxoresolvin D2 + NADH + H(+)</text>
        <dbReference type="Rhea" id="RHEA:53588"/>
        <dbReference type="ChEBI" id="CHEBI:15378"/>
        <dbReference type="ChEBI" id="CHEBI:57540"/>
        <dbReference type="ChEBI" id="CHEBI:57945"/>
        <dbReference type="ChEBI" id="CHEBI:133367"/>
        <dbReference type="ChEBI" id="CHEBI:137498"/>
    </reaction>
    <physiologicalReaction direction="left-to-right" evidence="2">
        <dbReference type="Rhea" id="RHEA:53589"/>
    </physiologicalReaction>
</comment>
<comment type="subunit">
    <text evidence="1">Homodimer.</text>
</comment>
<comment type="subcellular location">
    <subcellularLocation>
        <location evidence="1">Cytoplasm</location>
    </subcellularLocation>
</comment>
<comment type="tissue specificity">
    <text evidence="4 5">Expressed in proximal convoluted tubules of the kidney, where it colocalizes with the prostaglandin transporter SLC22A22 (at protein level) (PubMed:20448048). Expressed in lung, intestine, stomach and liver (PubMed:8950170).</text>
</comment>
<comment type="similarity">
    <text evidence="6">Belongs to the short-chain dehydrogenases/reductases (SDR) family.</text>
</comment>
<comment type="sequence caution" evidence="6">
    <conflict type="frameshift">
        <sequence resource="EMBL-CDS" id="AAB41825"/>
    </conflict>
</comment>
<dbReference type="EC" id="1.1.1.141" evidence="7"/>
<dbReference type="EC" id="1.1.1.-" evidence="2"/>
<dbReference type="EC" id="1.1.1.232" evidence="2"/>
<dbReference type="EMBL" id="U44389">
    <property type="protein sequence ID" value="AAB41825.1"/>
    <property type="status" value="ALT_FRAME"/>
    <property type="molecule type" value="mRNA"/>
</dbReference>
<dbReference type="EMBL" id="AK146038">
    <property type="protein sequence ID" value="BAE26850.1"/>
    <property type="molecule type" value="mRNA"/>
</dbReference>
<dbReference type="EMBL" id="BC021157">
    <property type="protein sequence ID" value="AAH21157.1"/>
    <property type="molecule type" value="mRNA"/>
</dbReference>
<dbReference type="CCDS" id="CCDS40341.1"/>
<dbReference type="RefSeq" id="NP_032304.2">
    <property type="nucleotide sequence ID" value="NM_008278.2"/>
</dbReference>
<dbReference type="SMR" id="Q8VCC1"/>
<dbReference type="BioGRID" id="200406">
    <property type="interactions" value="2"/>
</dbReference>
<dbReference type="FunCoup" id="Q8VCC1">
    <property type="interactions" value="495"/>
</dbReference>
<dbReference type="STRING" id="10090.ENSMUSP00000034026"/>
<dbReference type="BindingDB" id="Q8VCC1"/>
<dbReference type="iPTMnet" id="Q8VCC1"/>
<dbReference type="PhosphoSitePlus" id="Q8VCC1"/>
<dbReference type="jPOST" id="Q8VCC1"/>
<dbReference type="PaxDb" id="10090-ENSMUSP00000034026"/>
<dbReference type="PeptideAtlas" id="Q8VCC1"/>
<dbReference type="ProteomicsDB" id="288131"/>
<dbReference type="Antibodypedia" id="1511">
    <property type="antibodies" value="586 antibodies from 37 providers"/>
</dbReference>
<dbReference type="DNASU" id="15446"/>
<dbReference type="Ensembl" id="ENSMUST00000034026.10">
    <property type="protein sequence ID" value="ENSMUSP00000034026.9"/>
    <property type="gene ID" value="ENSMUSG00000031613.10"/>
</dbReference>
<dbReference type="GeneID" id="15446"/>
<dbReference type="KEGG" id="mmu:15446"/>
<dbReference type="UCSC" id="uc009lso.1">
    <property type="organism name" value="mouse"/>
</dbReference>
<dbReference type="AGR" id="MGI:108085"/>
<dbReference type="CTD" id="3248"/>
<dbReference type="MGI" id="MGI:108085">
    <property type="gene designation" value="Hpgd"/>
</dbReference>
<dbReference type="VEuPathDB" id="HostDB:ENSMUSG00000031613"/>
<dbReference type="eggNOG" id="KOG4169">
    <property type="taxonomic scope" value="Eukaryota"/>
</dbReference>
<dbReference type="GeneTree" id="ENSGT00940000154593"/>
<dbReference type="HOGENOM" id="CLU_010194_2_16_1"/>
<dbReference type="InParanoid" id="Q8VCC1"/>
<dbReference type="OMA" id="RSHVICP"/>
<dbReference type="OrthoDB" id="37659at2759"/>
<dbReference type="PhylomeDB" id="Q8VCC1"/>
<dbReference type="TreeFam" id="TF324093"/>
<dbReference type="Reactome" id="R-MMU-2142700">
    <property type="pathway name" value="Biosynthesis of Lipoxins (LX)"/>
</dbReference>
<dbReference type="Reactome" id="R-MMU-9018676">
    <property type="pathway name" value="Biosynthesis of D-series resolvins"/>
</dbReference>
<dbReference type="Reactome" id="R-MMU-9018896">
    <property type="pathway name" value="Biosynthesis of E-series 18(S)-resolvins"/>
</dbReference>
<dbReference type="SABIO-RK" id="Q8VCC1"/>
<dbReference type="BioGRID-ORCS" id="15446">
    <property type="hits" value="1 hit in 80 CRISPR screens"/>
</dbReference>
<dbReference type="ChiTaRS" id="Hpgd">
    <property type="organism name" value="mouse"/>
</dbReference>
<dbReference type="PRO" id="PR:Q8VCC1"/>
<dbReference type="Proteomes" id="UP000000589">
    <property type="component" value="Chromosome 8"/>
</dbReference>
<dbReference type="RNAct" id="Q8VCC1">
    <property type="molecule type" value="protein"/>
</dbReference>
<dbReference type="Bgee" id="ENSMUSG00000031613">
    <property type="expression patterns" value="Expressed in right lung lobe and 205 other cell types or tissues"/>
</dbReference>
<dbReference type="GO" id="GO:0016323">
    <property type="term" value="C:basolateral plasma membrane"/>
    <property type="evidence" value="ECO:0000314"/>
    <property type="project" value="MGI"/>
</dbReference>
<dbReference type="GO" id="GO:0005829">
    <property type="term" value="C:cytosol"/>
    <property type="evidence" value="ECO:0007669"/>
    <property type="project" value="Ensembl"/>
</dbReference>
<dbReference type="GO" id="GO:0005615">
    <property type="term" value="C:extracellular space"/>
    <property type="evidence" value="ECO:0007669"/>
    <property type="project" value="Ensembl"/>
</dbReference>
<dbReference type="GO" id="GO:0005654">
    <property type="term" value="C:nucleoplasm"/>
    <property type="evidence" value="ECO:0007669"/>
    <property type="project" value="Ensembl"/>
</dbReference>
<dbReference type="GO" id="GO:0016404">
    <property type="term" value="F:15-hydroxyprostaglandin dehydrogenase (NAD+) activity"/>
    <property type="evidence" value="ECO:0000314"/>
    <property type="project" value="MGI"/>
</dbReference>
<dbReference type="GO" id="GO:0042802">
    <property type="term" value="F:identical protein binding"/>
    <property type="evidence" value="ECO:0007669"/>
    <property type="project" value="Ensembl"/>
</dbReference>
<dbReference type="GO" id="GO:0051287">
    <property type="term" value="F:NAD binding"/>
    <property type="evidence" value="ECO:0000250"/>
    <property type="project" value="UniProtKB"/>
</dbReference>
<dbReference type="GO" id="GO:0070403">
    <property type="term" value="F:NAD+ binding"/>
    <property type="evidence" value="ECO:0000250"/>
    <property type="project" value="UniProtKB"/>
</dbReference>
<dbReference type="GO" id="GO:0004957">
    <property type="term" value="F:prostaglandin E receptor activity"/>
    <property type="evidence" value="ECO:0000250"/>
    <property type="project" value="UniProtKB"/>
</dbReference>
<dbReference type="GO" id="GO:0097070">
    <property type="term" value="P:ductus arteriosus closure"/>
    <property type="evidence" value="ECO:0000315"/>
    <property type="project" value="UniProtKB"/>
</dbReference>
<dbReference type="GO" id="GO:0007565">
    <property type="term" value="P:female pregnancy"/>
    <property type="evidence" value="ECO:0000250"/>
    <property type="project" value="UniProtKB"/>
</dbReference>
<dbReference type="GO" id="GO:0001822">
    <property type="term" value="P:kidney development"/>
    <property type="evidence" value="ECO:0007669"/>
    <property type="project" value="Ensembl"/>
</dbReference>
<dbReference type="GO" id="GO:0045786">
    <property type="term" value="P:negative regulation of cell cycle"/>
    <property type="evidence" value="ECO:0000250"/>
    <property type="project" value="UniProtKB"/>
</dbReference>
<dbReference type="GO" id="GO:0030728">
    <property type="term" value="P:ovulation"/>
    <property type="evidence" value="ECO:0000250"/>
    <property type="project" value="UniProtKB"/>
</dbReference>
<dbReference type="GO" id="GO:0007567">
    <property type="term" value="P:parturition"/>
    <property type="evidence" value="ECO:0000250"/>
    <property type="project" value="UniProtKB"/>
</dbReference>
<dbReference type="GO" id="GO:0043065">
    <property type="term" value="P:positive regulation of apoptotic process"/>
    <property type="evidence" value="ECO:0007669"/>
    <property type="project" value="Ensembl"/>
</dbReference>
<dbReference type="GO" id="GO:1904707">
    <property type="term" value="P:positive regulation of vascular associated smooth muscle cell proliferation"/>
    <property type="evidence" value="ECO:0007669"/>
    <property type="project" value="Ensembl"/>
</dbReference>
<dbReference type="GO" id="GO:0006693">
    <property type="term" value="P:prostaglandin metabolic process"/>
    <property type="evidence" value="ECO:0000250"/>
    <property type="project" value="UniProtKB"/>
</dbReference>
<dbReference type="GO" id="GO:1905828">
    <property type="term" value="P:regulation of prostaglandin catabolic process"/>
    <property type="evidence" value="ECO:0000250"/>
    <property type="project" value="UniProtKB"/>
</dbReference>
<dbReference type="GO" id="GO:0032355">
    <property type="term" value="P:response to estradiol"/>
    <property type="evidence" value="ECO:0007669"/>
    <property type="project" value="Ensembl"/>
</dbReference>
<dbReference type="GO" id="GO:0045471">
    <property type="term" value="P:response to ethanol"/>
    <property type="evidence" value="ECO:0007669"/>
    <property type="project" value="Ensembl"/>
</dbReference>
<dbReference type="GO" id="GO:0032496">
    <property type="term" value="P:response to lipopolysaccharide"/>
    <property type="evidence" value="ECO:0007669"/>
    <property type="project" value="Ensembl"/>
</dbReference>
<dbReference type="GO" id="GO:0070493">
    <property type="term" value="P:thrombin-activated receptor signaling pathway"/>
    <property type="evidence" value="ECO:0000250"/>
    <property type="project" value="UniProtKB"/>
</dbReference>
<dbReference type="GO" id="GO:0007179">
    <property type="term" value="P:transforming growth factor beta receptor signaling pathway"/>
    <property type="evidence" value="ECO:0000250"/>
    <property type="project" value="UniProtKB"/>
</dbReference>
<dbReference type="CDD" id="cd05323">
    <property type="entry name" value="ADH_SDR_c_like"/>
    <property type="match status" value="1"/>
</dbReference>
<dbReference type="FunFam" id="3.40.50.720:FF:000149">
    <property type="entry name" value="15-hydroxyprostaglandin dehydrogenase [NAD(+)]"/>
    <property type="match status" value="1"/>
</dbReference>
<dbReference type="Gene3D" id="3.40.50.720">
    <property type="entry name" value="NAD(P)-binding Rossmann-like Domain"/>
    <property type="match status" value="1"/>
</dbReference>
<dbReference type="InterPro" id="IPR036291">
    <property type="entry name" value="NAD(P)-bd_dom_sf"/>
</dbReference>
<dbReference type="InterPro" id="IPR020904">
    <property type="entry name" value="Sc_DH/Rdtase_CS"/>
</dbReference>
<dbReference type="InterPro" id="IPR002347">
    <property type="entry name" value="SDR_fam"/>
</dbReference>
<dbReference type="PANTHER" id="PTHR44229">
    <property type="entry name" value="15-HYDROXYPROSTAGLANDIN DEHYDROGENASE [NAD(+)]"/>
    <property type="match status" value="1"/>
</dbReference>
<dbReference type="PANTHER" id="PTHR44229:SF4">
    <property type="entry name" value="15-HYDROXYPROSTAGLANDIN DEHYDROGENASE [NAD(+)]"/>
    <property type="match status" value="1"/>
</dbReference>
<dbReference type="Pfam" id="PF00106">
    <property type="entry name" value="adh_short"/>
    <property type="match status" value="1"/>
</dbReference>
<dbReference type="PRINTS" id="PR00081">
    <property type="entry name" value="GDHRDH"/>
</dbReference>
<dbReference type="PRINTS" id="PR00080">
    <property type="entry name" value="SDRFAMILY"/>
</dbReference>
<dbReference type="SUPFAM" id="SSF51735">
    <property type="entry name" value="NAD(P)-binding Rossmann-fold domains"/>
    <property type="match status" value="1"/>
</dbReference>
<dbReference type="PROSITE" id="PS00061">
    <property type="entry name" value="ADH_SHORT"/>
    <property type="match status" value="1"/>
</dbReference>
<feature type="chain" id="PRO_0000253626" description="15-hydroxyprostaglandin dehydrogenase [NAD(+)]">
    <location>
        <begin position="1"/>
        <end position="269"/>
    </location>
</feature>
<feature type="active site" description="Proton acceptor" evidence="3">
    <location>
        <position position="151"/>
    </location>
</feature>
<feature type="binding site" evidence="1">
    <location>
        <begin position="12"/>
        <end position="20"/>
    </location>
    <ligand>
        <name>NAD(+)</name>
        <dbReference type="ChEBI" id="CHEBI:57540"/>
    </ligand>
</feature>
<feature type="binding site" evidence="1">
    <location>
        <begin position="36"/>
        <end position="37"/>
    </location>
    <ligand>
        <name>NAD(+)</name>
        <dbReference type="ChEBI" id="CHEBI:57540"/>
    </ligand>
</feature>
<feature type="binding site" evidence="1">
    <location>
        <begin position="63"/>
        <end position="65"/>
    </location>
    <ligand>
        <name>NAD(+)</name>
        <dbReference type="ChEBI" id="CHEBI:57540"/>
    </ligand>
</feature>
<feature type="binding site" evidence="1">
    <location>
        <position position="91"/>
    </location>
    <ligand>
        <name>NAD(+)</name>
        <dbReference type="ChEBI" id="CHEBI:57540"/>
    </ligand>
</feature>
<feature type="binding site" evidence="1">
    <location>
        <position position="138"/>
    </location>
    <ligand>
        <name>substrate</name>
    </ligand>
</feature>
<feature type="binding site" evidence="1">
    <location>
        <position position="148"/>
    </location>
    <ligand>
        <name>substrate</name>
    </ligand>
</feature>
<feature type="binding site" evidence="1">
    <location>
        <begin position="151"/>
        <end position="155"/>
    </location>
    <ligand>
        <name>NAD(+)</name>
        <dbReference type="ChEBI" id="CHEBI:57540"/>
    </ligand>
</feature>
<feature type="binding site" evidence="1">
    <location>
        <begin position="186"/>
        <end position="188"/>
    </location>
    <ligand>
        <name>NAD(+)</name>
        <dbReference type="ChEBI" id="CHEBI:57540"/>
    </ligand>
</feature>
<feature type="sequence conflict" description="In Ref. 1; AAB41825." evidence="6" ref="1">
    <original>S</original>
    <variation>G</variation>
    <location>
        <position position="113"/>
    </location>
</feature>
<feature type="sequence conflict" description="In Ref. 1; AAB41825." evidence="6" ref="1">
    <original>A</original>
    <variation>S</variation>
    <location>
        <position position="153"/>
    </location>
</feature>
<feature type="sequence conflict" description="In Ref. 1; AAB41825." evidence="6" ref="1">
    <original>E</original>
    <variation>G</variation>
    <location>
        <position position="205"/>
    </location>
</feature>
<feature type="sequence conflict" description="In Ref. 1; AAB41825." evidence="6" ref="1">
    <original>T</original>
    <variation>A</variation>
    <location>
        <position position="224"/>
    </location>
</feature>
<feature type="sequence conflict" description="In Ref. 1; AAB41825." evidence="6" ref="1">
    <original>N</original>
    <variation>D</variation>
    <location>
        <position position="231"/>
    </location>
</feature>
<feature type="sequence conflict" description="In Ref. 1; AAB41825." evidence="6" ref="1">
    <original>A</original>
    <variation>P</variation>
    <location>
        <position position="241"/>
    </location>
</feature>
<feature type="sequence conflict" description="In Ref. 1; AAB41825." evidence="6" ref="1">
    <original>T</original>
    <variation>S</variation>
    <location>
        <position position="246"/>
    </location>
</feature>
<feature type="sequence conflict" description="In Ref. 1; AAB41825." evidence="6" ref="1">
    <original>K</original>
    <variation>E</variation>
    <location>
        <position position="249"/>
    </location>
</feature>
<organism>
    <name type="scientific">Mus musculus</name>
    <name type="common">Mouse</name>
    <dbReference type="NCBI Taxonomy" id="10090"/>
    <lineage>
        <taxon>Eukaryota</taxon>
        <taxon>Metazoa</taxon>
        <taxon>Chordata</taxon>
        <taxon>Craniata</taxon>
        <taxon>Vertebrata</taxon>
        <taxon>Euteleostomi</taxon>
        <taxon>Mammalia</taxon>
        <taxon>Eutheria</taxon>
        <taxon>Euarchontoglires</taxon>
        <taxon>Glires</taxon>
        <taxon>Rodentia</taxon>
        <taxon>Myomorpha</taxon>
        <taxon>Muroidea</taxon>
        <taxon>Muridae</taxon>
        <taxon>Murinae</taxon>
        <taxon>Mus</taxon>
        <taxon>Mus</taxon>
    </lineage>
</organism>
<evidence type="ECO:0000250" key="1"/>
<evidence type="ECO:0000250" key="2">
    <source>
        <dbReference type="UniProtKB" id="P15428"/>
    </source>
</evidence>
<evidence type="ECO:0000255" key="3">
    <source>
        <dbReference type="PROSITE-ProRule" id="PRU10001"/>
    </source>
</evidence>
<evidence type="ECO:0000269" key="4">
    <source>
    </source>
</evidence>
<evidence type="ECO:0000269" key="5">
    <source>
    </source>
</evidence>
<evidence type="ECO:0000305" key="6"/>
<evidence type="ECO:0000305" key="7">
    <source>
    </source>
</evidence>
<proteinExistence type="evidence at protein level"/>
<keyword id="KW-0963">Cytoplasm</keyword>
<keyword id="KW-0276">Fatty acid metabolism</keyword>
<keyword id="KW-0443">Lipid metabolism</keyword>
<keyword id="KW-0520">NAD</keyword>
<keyword id="KW-0560">Oxidoreductase</keyword>
<keyword id="KW-0644">Prostaglandin metabolism</keyword>
<keyword id="KW-1185">Reference proteome</keyword>
<keyword id="KW-0043">Tumor suppressor</keyword>